<proteinExistence type="inferred from homology"/>
<reference key="1">
    <citation type="journal article" date="2010" name="BMC Genomics">
        <title>Complete genome sequence and lifestyle of black-pigmented Corynebacterium aurimucosum ATCC 700975 (formerly C. nigricans CN-1) isolated from a vaginal swab of a woman with spontaneous abortion.</title>
        <authorList>
            <person name="Trost E."/>
            <person name="Gotker S."/>
            <person name="Schneider J."/>
            <person name="Schneiker-Bekel S."/>
            <person name="Szczepanowski R."/>
            <person name="Tilker A."/>
            <person name="Viehoever P."/>
            <person name="Arnold W."/>
            <person name="Bekel T."/>
            <person name="Blom J."/>
            <person name="Gartemann K.H."/>
            <person name="Linke B."/>
            <person name="Goesmann A."/>
            <person name="Puhler A."/>
            <person name="Shukla S.K."/>
            <person name="Tauch A."/>
        </authorList>
    </citation>
    <scope>NUCLEOTIDE SEQUENCE [LARGE SCALE GENOMIC DNA]</scope>
    <source>
        <strain>ATCC 700975 / DSM 44827 / CIP 107346 / CN-1</strain>
    </source>
</reference>
<comment type="similarity">
    <text evidence="1">Belongs to the bacterial ribosomal protein bS16 family.</text>
</comment>
<feature type="chain" id="PRO_1000196376" description="Small ribosomal subunit protein bS16">
    <location>
        <begin position="1"/>
        <end position="172"/>
    </location>
</feature>
<feature type="region of interest" description="Disordered" evidence="2">
    <location>
        <begin position="125"/>
        <end position="172"/>
    </location>
</feature>
<feature type="compositionally biased region" description="Basic and acidic residues" evidence="2">
    <location>
        <begin position="129"/>
        <end position="144"/>
    </location>
</feature>
<feature type="compositionally biased region" description="Basic and acidic residues" evidence="2">
    <location>
        <begin position="152"/>
        <end position="163"/>
    </location>
</feature>
<evidence type="ECO:0000255" key="1">
    <source>
        <dbReference type="HAMAP-Rule" id="MF_00385"/>
    </source>
</evidence>
<evidence type="ECO:0000256" key="2">
    <source>
        <dbReference type="SAM" id="MobiDB-lite"/>
    </source>
</evidence>
<evidence type="ECO:0000305" key="3"/>
<protein>
    <recommendedName>
        <fullName evidence="1">Small ribosomal subunit protein bS16</fullName>
    </recommendedName>
    <alternativeName>
        <fullName evidence="3">30S ribosomal protein S16</fullName>
    </alternativeName>
</protein>
<keyword id="KW-1185">Reference proteome</keyword>
<keyword id="KW-0687">Ribonucleoprotein</keyword>
<keyword id="KW-0689">Ribosomal protein</keyword>
<name>RS16_CORA7</name>
<sequence>MAVKIKLQRMGKIRNAEYRVIVADARTRRSGKAIENIGIYQPKQEPSLIQIDSERAQYWLGVGAQPTEPVLALLKVTGDWQKFKGLPGAEGTLKVAEEKPSKLDLFNAALAEANNGPTIEAITEKKRKAKEEAEAKAAAEKAAEEAAAAEAAKAEEEAAKAEEADSAEESAE</sequence>
<organism>
    <name type="scientific">Corynebacterium aurimucosum (strain ATCC 700975 / DSM 44827 / CIP 107346 / CN-1)</name>
    <name type="common">Corynebacterium nigricans</name>
    <dbReference type="NCBI Taxonomy" id="548476"/>
    <lineage>
        <taxon>Bacteria</taxon>
        <taxon>Bacillati</taxon>
        <taxon>Actinomycetota</taxon>
        <taxon>Actinomycetes</taxon>
        <taxon>Mycobacteriales</taxon>
        <taxon>Corynebacteriaceae</taxon>
        <taxon>Corynebacterium</taxon>
    </lineage>
</organism>
<gene>
    <name evidence="1" type="primary">rpsP</name>
    <name type="ordered locus">cauri_1587</name>
</gene>
<dbReference type="EMBL" id="CP001601">
    <property type="protein sequence ID" value="ACP33180.1"/>
    <property type="molecule type" value="Genomic_DNA"/>
</dbReference>
<dbReference type="RefSeq" id="WP_010190428.1">
    <property type="nucleotide sequence ID" value="NC_012590.1"/>
</dbReference>
<dbReference type="SMR" id="C3PH76"/>
<dbReference type="STRING" id="548476.cauri_1587"/>
<dbReference type="GeneID" id="31924217"/>
<dbReference type="KEGG" id="car:cauri_1587"/>
<dbReference type="eggNOG" id="COG0228">
    <property type="taxonomic scope" value="Bacteria"/>
</dbReference>
<dbReference type="HOGENOM" id="CLU_100590_1_1_11"/>
<dbReference type="OrthoDB" id="9807878at2"/>
<dbReference type="Proteomes" id="UP000002077">
    <property type="component" value="Chromosome"/>
</dbReference>
<dbReference type="GO" id="GO:0005737">
    <property type="term" value="C:cytoplasm"/>
    <property type="evidence" value="ECO:0007669"/>
    <property type="project" value="UniProtKB-ARBA"/>
</dbReference>
<dbReference type="GO" id="GO:0015935">
    <property type="term" value="C:small ribosomal subunit"/>
    <property type="evidence" value="ECO:0007669"/>
    <property type="project" value="TreeGrafter"/>
</dbReference>
<dbReference type="GO" id="GO:0003735">
    <property type="term" value="F:structural constituent of ribosome"/>
    <property type="evidence" value="ECO:0007669"/>
    <property type="project" value="InterPro"/>
</dbReference>
<dbReference type="GO" id="GO:0006412">
    <property type="term" value="P:translation"/>
    <property type="evidence" value="ECO:0007669"/>
    <property type="project" value="UniProtKB-UniRule"/>
</dbReference>
<dbReference type="Gene3D" id="3.30.1320.10">
    <property type="match status" value="1"/>
</dbReference>
<dbReference type="HAMAP" id="MF_00385">
    <property type="entry name" value="Ribosomal_bS16"/>
    <property type="match status" value="1"/>
</dbReference>
<dbReference type="InterPro" id="IPR000307">
    <property type="entry name" value="Ribosomal_bS16"/>
</dbReference>
<dbReference type="InterPro" id="IPR023803">
    <property type="entry name" value="Ribosomal_bS16_dom_sf"/>
</dbReference>
<dbReference type="NCBIfam" id="NF011093">
    <property type="entry name" value="PRK14520.1"/>
    <property type="match status" value="1"/>
</dbReference>
<dbReference type="NCBIfam" id="TIGR00002">
    <property type="entry name" value="S16"/>
    <property type="match status" value="1"/>
</dbReference>
<dbReference type="PANTHER" id="PTHR12919">
    <property type="entry name" value="30S RIBOSOMAL PROTEIN S16"/>
    <property type="match status" value="1"/>
</dbReference>
<dbReference type="PANTHER" id="PTHR12919:SF20">
    <property type="entry name" value="SMALL RIBOSOMAL SUBUNIT PROTEIN BS16M"/>
    <property type="match status" value="1"/>
</dbReference>
<dbReference type="Pfam" id="PF00886">
    <property type="entry name" value="Ribosomal_S16"/>
    <property type="match status" value="1"/>
</dbReference>
<dbReference type="SUPFAM" id="SSF54565">
    <property type="entry name" value="Ribosomal protein S16"/>
    <property type="match status" value="1"/>
</dbReference>
<accession>C3PH76</accession>